<sequence length="447" mass="49199">MTAHEVNFDGLVGLTHHYAGLSFGNEASTRHRFQMSNPRLAVKQGLLKMKALADAGFPQAVIPPHERPFIPALRQLGFTGSDEQILDKVARQAPRWLSSVSSASPMWVANAATVCPSADALDGKVHLTVANLNNKFHRALEAPVTEALLRAIFRDESQFSVHSALPQVALLGDEGAANHNRLGGEYGSAGVQLFVYGREEENEIRPARYPARQSREASEAVARLNQVNPQQVIFAQQNPEVIDQGVFHNDVIAVSNRQVLFCHEAAFARQKVLINQLRTRVDGFMAIEVPAGEVSVSDAVATYLFNSQLLSRDDGSMLLVLPRECQDHVGVWRYLNKLVAEDNPISAMQVFDLRESMANGGGPACLRLRVVLTEEERRAVNPAVMMNDALFTALNAWADRYYRDRLTAADLADPLLLREGREALDVLTRLLDLGSVYPFQQTGAADG</sequence>
<accession>B5FJD5</accession>
<dbReference type="EC" id="3.5.3.23" evidence="1"/>
<dbReference type="EMBL" id="CP001144">
    <property type="protein sequence ID" value="ACH74609.1"/>
    <property type="molecule type" value="Genomic_DNA"/>
</dbReference>
<dbReference type="RefSeq" id="WP_000123932.1">
    <property type="nucleotide sequence ID" value="NC_011205.1"/>
</dbReference>
<dbReference type="SMR" id="B5FJD5"/>
<dbReference type="KEGG" id="sed:SeD_A2040"/>
<dbReference type="HOGENOM" id="CLU_053835_0_0_6"/>
<dbReference type="UniPathway" id="UPA00185">
    <property type="reaction ID" value="UER00280"/>
</dbReference>
<dbReference type="Proteomes" id="UP000008322">
    <property type="component" value="Chromosome"/>
</dbReference>
<dbReference type="GO" id="GO:0009015">
    <property type="term" value="F:N-succinylarginine dihydrolase activity"/>
    <property type="evidence" value="ECO:0007669"/>
    <property type="project" value="UniProtKB-UniRule"/>
</dbReference>
<dbReference type="GO" id="GO:0019544">
    <property type="term" value="P:arginine catabolic process to glutamate"/>
    <property type="evidence" value="ECO:0007669"/>
    <property type="project" value="UniProtKB-UniRule"/>
</dbReference>
<dbReference type="GO" id="GO:0019545">
    <property type="term" value="P:arginine catabolic process to succinate"/>
    <property type="evidence" value="ECO:0007669"/>
    <property type="project" value="UniProtKB-UniRule"/>
</dbReference>
<dbReference type="FunFam" id="3.75.10.20:FF:000001">
    <property type="entry name" value="N-succinylarginine dihydrolase"/>
    <property type="match status" value="1"/>
</dbReference>
<dbReference type="Gene3D" id="3.75.10.20">
    <property type="entry name" value="Succinylarginine dihydrolase"/>
    <property type="match status" value="1"/>
</dbReference>
<dbReference type="HAMAP" id="MF_01172">
    <property type="entry name" value="AstB"/>
    <property type="match status" value="1"/>
</dbReference>
<dbReference type="InterPro" id="IPR037031">
    <property type="entry name" value="AstB_sf"/>
</dbReference>
<dbReference type="InterPro" id="IPR007079">
    <property type="entry name" value="SuccinylArg_d-Hdrlase_AstB"/>
</dbReference>
<dbReference type="NCBIfam" id="TIGR03241">
    <property type="entry name" value="arg_catab_astB"/>
    <property type="match status" value="1"/>
</dbReference>
<dbReference type="NCBIfam" id="NF009789">
    <property type="entry name" value="PRK13281.1"/>
    <property type="match status" value="1"/>
</dbReference>
<dbReference type="PANTHER" id="PTHR30420">
    <property type="entry name" value="N-SUCCINYLARGININE DIHYDROLASE"/>
    <property type="match status" value="1"/>
</dbReference>
<dbReference type="PANTHER" id="PTHR30420:SF2">
    <property type="entry name" value="N-SUCCINYLARGININE DIHYDROLASE"/>
    <property type="match status" value="1"/>
</dbReference>
<dbReference type="Pfam" id="PF04996">
    <property type="entry name" value="AstB"/>
    <property type="match status" value="1"/>
</dbReference>
<dbReference type="SUPFAM" id="SSF55909">
    <property type="entry name" value="Pentein"/>
    <property type="match status" value="1"/>
</dbReference>
<name>ASTB_SALDC</name>
<comment type="function">
    <text evidence="1">Catalyzes the hydrolysis of N(2)-succinylarginine into N(2)-succinylornithine, ammonia and CO(2).</text>
</comment>
<comment type="catalytic activity">
    <reaction evidence="1">
        <text>N(2)-succinyl-L-arginine + 2 H2O + 2 H(+) = N(2)-succinyl-L-ornithine + 2 NH4(+) + CO2</text>
        <dbReference type="Rhea" id="RHEA:19533"/>
        <dbReference type="ChEBI" id="CHEBI:15377"/>
        <dbReference type="ChEBI" id="CHEBI:15378"/>
        <dbReference type="ChEBI" id="CHEBI:16526"/>
        <dbReference type="ChEBI" id="CHEBI:28938"/>
        <dbReference type="ChEBI" id="CHEBI:58241"/>
        <dbReference type="ChEBI" id="CHEBI:58514"/>
        <dbReference type="EC" id="3.5.3.23"/>
    </reaction>
</comment>
<comment type="pathway">
    <text evidence="1">Amino-acid degradation; L-arginine degradation via AST pathway; L-glutamate and succinate from L-arginine: step 2/5.</text>
</comment>
<comment type="subunit">
    <text evidence="1">Homodimer.</text>
</comment>
<comment type="similarity">
    <text evidence="1">Belongs to the succinylarginine dihydrolase family.</text>
</comment>
<proteinExistence type="inferred from homology"/>
<keyword id="KW-0056">Arginine metabolism</keyword>
<keyword id="KW-0378">Hydrolase</keyword>
<gene>
    <name evidence="1" type="primary">astB</name>
    <name type="ordered locus">SeD_A2040</name>
</gene>
<evidence type="ECO:0000255" key="1">
    <source>
        <dbReference type="HAMAP-Rule" id="MF_01172"/>
    </source>
</evidence>
<organism>
    <name type="scientific">Salmonella dublin (strain CT_02021853)</name>
    <dbReference type="NCBI Taxonomy" id="439851"/>
    <lineage>
        <taxon>Bacteria</taxon>
        <taxon>Pseudomonadati</taxon>
        <taxon>Pseudomonadota</taxon>
        <taxon>Gammaproteobacteria</taxon>
        <taxon>Enterobacterales</taxon>
        <taxon>Enterobacteriaceae</taxon>
        <taxon>Salmonella</taxon>
    </lineage>
</organism>
<protein>
    <recommendedName>
        <fullName evidence="1">N-succinylarginine dihydrolase</fullName>
        <ecNumber evidence="1">3.5.3.23</ecNumber>
    </recommendedName>
</protein>
<reference key="1">
    <citation type="journal article" date="2011" name="J. Bacteriol.">
        <title>Comparative genomics of 28 Salmonella enterica isolates: evidence for CRISPR-mediated adaptive sublineage evolution.</title>
        <authorList>
            <person name="Fricke W.F."/>
            <person name="Mammel M.K."/>
            <person name="McDermott P.F."/>
            <person name="Tartera C."/>
            <person name="White D.G."/>
            <person name="Leclerc J.E."/>
            <person name="Ravel J."/>
            <person name="Cebula T.A."/>
        </authorList>
    </citation>
    <scope>NUCLEOTIDE SEQUENCE [LARGE SCALE GENOMIC DNA]</scope>
    <source>
        <strain>CT_02021853</strain>
    </source>
</reference>
<feature type="chain" id="PRO_1000138022" description="N-succinylarginine dihydrolase">
    <location>
        <begin position="1"/>
        <end position="447"/>
    </location>
</feature>
<feature type="active site" evidence="1">
    <location>
        <position position="174"/>
    </location>
</feature>
<feature type="active site" evidence="1">
    <location>
        <position position="248"/>
    </location>
</feature>
<feature type="active site" description="Nucleophile" evidence="1">
    <location>
        <position position="365"/>
    </location>
</feature>
<feature type="binding site" evidence="1">
    <location>
        <begin position="19"/>
        <end position="28"/>
    </location>
    <ligand>
        <name>substrate</name>
    </ligand>
</feature>
<feature type="binding site" evidence="1">
    <location>
        <position position="110"/>
    </location>
    <ligand>
        <name>substrate</name>
    </ligand>
</feature>
<feature type="binding site" evidence="1">
    <location>
        <begin position="137"/>
        <end position="138"/>
    </location>
    <ligand>
        <name>substrate</name>
    </ligand>
</feature>
<feature type="binding site" evidence="1">
    <location>
        <position position="212"/>
    </location>
    <ligand>
        <name>substrate</name>
    </ligand>
</feature>
<feature type="binding site" evidence="1">
    <location>
        <position position="250"/>
    </location>
    <ligand>
        <name>substrate</name>
    </ligand>
</feature>
<feature type="binding site" evidence="1">
    <location>
        <position position="359"/>
    </location>
    <ligand>
        <name>substrate</name>
    </ligand>
</feature>